<sequence>MATPEEKAKALEAALGQIEKQFGKGAIMKLGETQKLDIEAISTGSLSLDVALGIGGLPMGRIVEIFGPESSGKTTLTLSVIAQAQKAGKTCAFIDAEHALDPIYAAKLGVDVKELLISQPDNGEQALEICDALVRSGAVDVVIVDSVAALTPKAEIEGEMGDTHVGLQARLMSQALRKLTGQIKNSNCLVVFINQIRMKIGVIFGNPETTTGGNALKFYASVRLDIRRVGSIKNGDEVIGNETRVKVVKNKVAPPFRQVDFQILYGEGISRNGELIELGVKHKLVNKSGAWFSYEGEKIGQGKTNAMKWLAEHPEQAAILEQKLRSELLANPEKALLADLEAESESNISEVESDF</sequence>
<dbReference type="EMBL" id="CP000436">
    <property type="protein sequence ID" value="ABI25578.1"/>
    <property type="molecule type" value="Genomic_DNA"/>
</dbReference>
<dbReference type="SMR" id="Q0I4T0"/>
<dbReference type="KEGG" id="hso:HS_1303"/>
<dbReference type="eggNOG" id="COG0468">
    <property type="taxonomic scope" value="Bacteria"/>
</dbReference>
<dbReference type="HOGENOM" id="CLU_040469_3_2_6"/>
<dbReference type="GO" id="GO:0005829">
    <property type="term" value="C:cytosol"/>
    <property type="evidence" value="ECO:0007669"/>
    <property type="project" value="TreeGrafter"/>
</dbReference>
<dbReference type="GO" id="GO:0005524">
    <property type="term" value="F:ATP binding"/>
    <property type="evidence" value="ECO:0007669"/>
    <property type="project" value="UniProtKB-UniRule"/>
</dbReference>
<dbReference type="GO" id="GO:0016887">
    <property type="term" value="F:ATP hydrolysis activity"/>
    <property type="evidence" value="ECO:0007669"/>
    <property type="project" value="InterPro"/>
</dbReference>
<dbReference type="GO" id="GO:0140664">
    <property type="term" value="F:ATP-dependent DNA damage sensor activity"/>
    <property type="evidence" value="ECO:0007669"/>
    <property type="project" value="InterPro"/>
</dbReference>
<dbReference type="GO" id="GO:0003684">
    <property type="term" value="F:damaged DNA binding"/>
    <property type="evidence" value="ECO:0007669"/>
    <property type="project" value="UniProtKB-UniRule"/>
</dbReference>
<dbReference type="GO" id="GO:0003697">
    <property type="term" value="F:single-stranded DNA binding"/>
    <property type="evidence" value="ECO:0007669"/>
    <property type="project" value="UniProtKB-UniRule"/>
</dbReference>
<dbReference type="GO" id="GO:0006310">
    <property type="term" value="P:DNA recombination"/>
    <property type="evidence" value="ECO:0007669"/>
    <property type="project" value="UniProtKB-UniRule"/>
</dbReference>
<dbReference type="GO" id="GO:0006281">
    <property type="term" value="P:DNA repair"/>
    <property type="evidence" value="ECO:0007669"/>
    <property type="project" value="UniProtKB-UniRule"/>
</dbReference>
<dbReference type="GO" id="GO:0009432">
    <property type="term" value="P:SOS response"/>
    <property type="evidence" value="ECO:0007669"/>
    <property type="project" value="UniProtKB-UniRule"/>
</dbReference>
<dbReference type="CDD" id="cd00983">
    <property type="entry name" value="RecA"/>
    <property type="match status" value="1"/>
</dbReference>
<dbReference type="FunFam" id="3.40.50.300:FF:000087">
    <property type="entry name" value="Recombinase RecA"/>
    <property type="match status" value="1"/>
</dbReference>
<dbReference type="Gene3D" id="3.40.50.300">
    <property type="entry name" value="P-loop containing nucleotide triphosphate hydrolases"/>
    <property type="match status" value="1"/>
</dbReference>
<dbReference type="HAMAP" id="MF_00268">
    <property type="entry name" value="RecA"/>
    <property type="match status" value="1"/>
</dbReference>
<dbReference type="InterPro" id="IPR003593">
    <property type="entry name" value="AAA+_ATPase"/>
</dbReference>
<dbReference type="InterPro" id="IPR013765">
    <property type="entry name" value="DNA_recomb/repair_RecA"/>
</dbReference>
<dbReference type="InterPro" id="IPR020584">
    <property type="entry name" value="DNA_recomb/repair_RecA_CS"/>
</dbReference>
<dbReference type="InterPro" id="IPR027417">
    <property type="entry name" value="P-loop_NTPase"/>
</dbReference>
<dbReference type="InterPro" id="IPR049261">
    <property type="entry name" value="RecA-like_C"/>
</dbReference>
<dbReference type="InterPro" id="IPR049428">
    <property type="entry name" value="RecA-like_N"/>
</dbReference>
<dbReference type="InterPro" id="IPR020588">
    <property type="entry name" value="RecA_ATP-bd"/>
</dbReference>
<dbReference type="InterPro" id="IPR023400">
    <property type="entry name" value="RecA_C_sf"/>
</dbReference>
<dbReference type="InterPro" id="IPR020587">
    <property type="entry name" value="RecA_monomer-monomer_interface"/>
</dbReference>
<dbReference type="NCBIfam" id="TIGR02012">
    <property type="entry name" value="tigrfam_recA"/>
    <property type="match status" value="1"/>
</dbReference>
<dbReference type="PANTHER" id="PTHR45900:SF1">
    <property type="entry name" value="MITOCHONDRIAL DNA REPAIR PROTEIN RECA HOMOLOG-RELATED"/>
    <property type="match status" value="1"/>
</dbReference>
<dbReference type="PANTHER" id="PTHR45900">
    <property type="entry name" value="RECA"/>
    <property type="match status" value="1"/>
</dbReference>
<dbReference type="Pfam" id="PF00154">
    <property type="entry name" value="RecA"/>
    <property type="match status" value="1"/>
</dbReference>
<dbReference type="Pfam" id="PF21096">
    <property type="entry name" value="RecA_C"/>
    <property type="match status" value="1"/>
</dbReference>
<dbReference type="PRINTS" id="PR00142">
    <property type="entry name" value="RECA"/>
</dbReference>
<dbReference type="SMART" id="SM00382">
    <property type="entry name" value="AAA"/>
    <property type="match status" value="1"/>
</dbReference>
<dbReference type="SUPFAM" id="SSF52540">
    <property type="entry name" value="P-loop containing nucleoside triphosphate hydrolases"/>
    <property type="match status" value="1"/>
</dbReference>
<dbReference type="SUPFAM" id="SSF54752">
    <property type="entry name" value="RecA protein, C-terminal domain"/>
    <property type="match status" value="1"/>
</dbReference>
<dbReference type="PROSITE" id="PS00321">
    <property type="entry name" value="RECA_1"/>
    <property type="match status" value="1"/>
</dbReference>
<dbReference type="PROSITE" id="PS50162">
    <property type="entry name" value="RECA_2"/>
    <property type="match status" value="1"/>
</dbReference>
<dbReference type="PROSITE" id="PS50163">
    <property type="entry name" value="RECA_3"/>
    <property type="match status" value="1"/>
</dbReference>
<feature type="chain" id="PRO_1000047928" description="Protein RecA">
    <location>
        <begin position="1"/>
        <end position="355"/>
    </location>
</feature>
<feature type="binding site" evidence="1">
    <location>
        <begin position="67"/>
        <end position="74"/>
    </location>
    <ligand>
        <name>ATP</name>
        <dbReference type="ChEBI" id="CHEBI:30616"/>
    </ligand>
</feature>
<accession>Q0I4T0</accession>
<evidence type="ECO:0000255" key="1">
    <source>
        <dbReference type="HAMAP-Rule" id="MF_00268"/>
    </source>
</evidence>
<keyword id="KW-0067">ATP-binding</keyword>
<keyword id="KW-0963">Cytoplasm</keyword>
<keyword id="KW-0227">DNA damage</keyword>
<keyword id="KW-0233">DNA recombination</keyword>
<keyword id="KW-0234">DNA repair</keyword>
<keyword id="KW-0238">DNA-binding</keyword>
<keyword id="KW-0547">Nucleotide-binding</keyword>
<keyword id="KW-0742">SOS response</keyword>
<name>RECA_HISS1</name>
<proteinExistence type="inferred from homology"/>
<comment type="function">
    <text evidence="1">Can catalyze the hydrolysis of ATP in the presence of single-stranded DNA, the ATP-dependent uptake of single-stranded DNA by duplex DNA, and the ATP-dependent hybridization of homologous single-stranded DNAs. It interacts with LexA causing its activation and leading to its autocatalytic cleavage.</text>
</comment>
<comment type="subcellular location">
    <subcellularLocation>
        <location evidence="1">Cytoplasm</location>
    </subcellularLocation>
</comment>
<comment type="similarity">
    <text evidence="1">Belongs to the RecA family.</text>
</comment>
<reference key="1">
    <citation type="journal article" date="2007" name="J. Bacteriol.">
        <title>Complete genome sequence of Haemophilus somnus (Histophilus somni) strain 129Pt and comparison to Haemophilus ducreyi 35000HP and Haemophilus influenzae Rd.</title>
        <authorList>
            <person name="Challacombe J.F."/>
            <person name="Duncan A.J."/>
            <person name="Brettin T.S."/>
            <person name="Bruce D."/>
            <person name="Chertkov O."/>
            <person name="Detter J.C."/>
            <person name="Han C.S."/>
            <person name="Misra M."/>
            <person name="Richardson P."/>
            <person name="Tapia R."/>
            <person name="Thayer N."/>
            <person name="Xie G."/>
            <person name="Inzana T.J."/>
        </authorList>
    </citation>
    <scope>NUCLEOTIDE SEQUENCE [LARGE SCALE GENOMIC DNA]</scope>
    <source>
        <strain>129Pt</strain>
    </source>
</reference>
<gene>
    <name evidence="1" type="primary">recA</name>
    <name type="ordered locus">HS_1303</name>
</gene>
<organism>
    <name type="scientific">Histophilus somni (strain 129Pt)</name>
    <name type="common">Haemophilus somnus</name>
    <dbReference type="NCBI Taxonomy" id="205914"/>
    <lineage>
        <taxon>Bacteria</taxon>
        <taxon>Pseudomonadati</taxon>
        <taxon>Pseudomonadota</taxon>
        <taxon>Gammaproteobacteria</taxon>
        <taxon>Pasteurellales</taxon>
        <taxon>Pasteurellaceae</taxon>
        <taxon>Histophilus</taxon>
    </lineage>
</organism>
<protein>
    <recommendedName>
        <fullName evidence="1">Protein RecA</fullName>
    </recommendedName>
    <alternativeName>
        <fullName evidence="1">Recombinase A</fullName>
    </alternativeName>
</protein>